<protein>
    <recommendedName>
        <fullName evidence="2">Fanconi anemia core complex-associated protein 20</fullName>
    </recommendedName>
    <alternativeName>
        <fullName evidence="2">FANCA-associated protein of 20 kDa</fullName>
    </alternativeName>
    <alternativeName>
        <fullName evidence="2">Fanconi anemia-associated protein of 20 kDa</fullName>
    </alternativeName>
</protein>
<gene>
    <name evidence="2" type="primary">Faap20</name>
</gene>
<proteinExistence type="evidence at transcript level"/>
<dbReference type="EMBL" id="AK144436">
    <property type="protein sequence ID" value="BAE25889.1"/>
    <property type="molecule type" value="mRNA"/>
</dbReference>
<dbReference type="EMBL" id="AL670413">
    <property type="status" value="NOT_ANNOTATED_CDS"/>
    <property type="molecule type" value="Genomic_DNA"/>
</dbReference>
<dbReference type="EMBL" id="BC117034">
    <property type="protein sequence ID" value="AAI17035.1"/>
    <property type="molecule type" value="mRNA"/>
</dbReference>
<dbReference type="EMBL" id="CA457860">
    <property type="status" value="NOT_ANNOTATED_CDS"/>
    <property type="molecule type" value="mRNA"/>
</dbReference>
<dbReference type="CCDS" id="CCDS57317.1">
    <molecule id="Q3UN58-1"/>
</dbReference>
<dbReference type="CCDS" id="CCDS84835.1">
    <molecule id="Q3UN58-3"/>
</dbReference>
<dbReference type="RefSeq" id="NP_001177374.1">
    <molecule id="Q3UN58-1"/>
    <property type="nucleotide sequence ID" value="NM_001190445.1"/>
</dbReference>
<dbReference type="RefSeq" id="NP_001334191.1">
    <molecule id="Q3UN58-3"/>
    <property type="nucleotide sequence ID" value="NM_001347262.1"/>
</dbReference>
<dbReference type="SMR" id="Q3UN58"/>
<dbReference type="BioGRID" id="212241">
    <property type="interactions" value="1"/>
</dbReference>
<dbReference type="FunCoup" id="Q3UN58">
    <property type="interactions" value="420"/>
</dbReference>
<dbReference type="STRING" id="10090.ENSMUSP00000137116"/>
<dbReference type="GlyGen" id="Q3UN58">
    <property type="glycosylation" value="1 site"/>
</dbReference>
<dbReference type="iPTMnet" id="Q3UN58"/>
<dbReference type="PhosphoSitePlus" id="Q3UN58"/>
<dbReference type="jPOST" id="Q3UN58"/>
<dbReference type="PaxDb" id="10090-ENSMUSP00000095354"/>
<dbReference type="ProteomicsDB" id="271868">
    <molecule id="Q3UN58-1"/>
</dbReference>
<dbReference type="ProteomicsDB" id="271869">
    <molecule id="Q3UN58-2"/>
</dbReference>
<dbReference type="ProteomicsDB" id="271870">
    <molecule id="Q3UN58-3"/>
</dbReference>
<dbReference type="Antibodypedia" id="52488">
    <property type="antibodies" value="51 antibodies from 13 providers"/>
</dbReference>
<dbReference type="Ensembl" id="ENSMUST00000097747.9">
    <molecule id="Q3UN58-2"/>
    <property type="protein sequence ID" value="ENSMUSP00000095354.3"/>
    <property type="gene ID" value="ENSMUSG00000073684.14"/>
</dbReference>
<dbReference type="Ensembl" id="ENSMUST00000105627.8">
    <molecule id="Q3UN58-3"/>
    <property type="protein sequence ID" value="ENSMUSP00000101252.2"/>
    <property type="gene ID" value="ENSMUSG00000073684.14"/>
</dbReference>
<dbReference type="Ensembl" id="ENSMUST00000178473.8">
    <molecule id="Q3UN58-1"/>
    <property type="protein sequence ID" value="ENSMUSP00000137116.2"/>
    <property type="gene ID" value="ENSMUSG00000073684.14"/>
</dbReference>
<dbReference type="GeneID" id="67513"/>
<dbReference type="KEGG" id="mmu:67513"/>
<dbReference type="UCSC" id="uc008wda.2">
    <molecule id="Q3UN58-1"/>
    <property type="organism name" value="mouse"/>
</dbReference>
<dbReference type="AGR" id="MGI:1914763"/>
<dbReference type="CTD" id="199990"/>
<dbReference type="MGI" id="MGI:1914763">
    <property type="gene designation" value="Faap20"/>
</dbReference>
<dbReference type="VEuPathDB" id="HostDB:ENSMUSG00000073684"/>
<dbReference type="eggNOG" id="ENOG502SE5R">
    <property type="taxonomic scope" value="Eukaryota"/>
</dbReference>
<dbReference type="GeneTree" id="ENSGT00390000010531"/>
<dbReference type="HOGENOM" id="CLU_122192_0_0_1"/>
<dbReference type="InParanoid" id="Q3UN58"/>
<dbReference type="OMA" id="GECARLW"/>
<dbReference type="OrthoDB" id="91716at9989"/>
<dbReference type="TreeFam" id="TF336358"/>
<dbReference type="Reactome" id="R-MMU-6783310">
    <property type="pathway name" value="Fanconi Anemia Pathway"/>
</dbReference>
<dbReference type="Reactome" id="R-MMU-9833482">
    <property type="pathway name" value="PKR-mediated signaling"/>
</dbReference>
<dbReference type="BioGRID-ORCS" id="67513">
    <property type="hits" value="1 hit in 82 CRISPR screens"/>
</dbReference>
<dbReference type="ChiTaRS" id="Faap20">
    <property type="organism name" value="mouse"/>
</dbReference>
<dbReference type="PRO" id="PR:Q3UN58"/>
<dbReference type="Proteomes" id="UP000000589">
    <property type="component" value="Chromosome 4"/>
</dbReference>
<dbReference type="RNAct" id="Q3UN58">
    <property type="molecule type" value="protein"/>
</dbReference>
<dbReference type="Bgee" id="ENSMUSG00000073684">
    <property type="expression patterns" value="Expressed in ileal epithelium and 257 other cell types or tissues"/>
</dbReference>
<dbReference type="ExpressionAtlas" id="Q3UN58">
    <property type="expression patterns" value="baseline and differential"/>
</dbReference>
<dbReference type="GO" id="GO:0030054">
    <property type="term" value="C:cell junction"/>
    <property type="evidence" value="ECO:0007669"/>
    <property type="project" value="Ensembl"/>
</dbReference>
<dbReference type="GO" id="GO:0000785">
    <property type="term" value="C:chromatin"/>
    <property type="evidence" value="ECO:0007669"/>
    <property type="project" value="Ensembl"/>
</dbReference>
<dbReference type="GO" id="GO:0005694">
    <property type="term" value="C:chromosome"/>
    <property type="evidence" value="ECO:0000250"/>
    <property type="project" value="UniProtKB"/>
</dbReference>
<dbReference type="GO" id="GO:0043240">
    <property type="term" value="C:Fanconi anaemia nuclear complex"/>
    <property type="evidence" value="ECO:0000250"/>
    <property type="project" value="UniProtKB"/>
</dbReference>
<dbReference type="GO" id="GO:0016604">
    <property type="term" value="C:nuclear body"/>
    <property type="evidence" value="ECO:0007669"/>
    <property type="project" value="Ensembl"/>
</dbReference>
<dbReference type="GO" id="GO:0070530">
    <property type="term" value="F:K63-linked polyubiquitin modification-dependent protein binding"/>
    <property type="evidence" value="ECO:0000250"/>
    <property type="project" value="UniProtKB"/>
</dbReference>
<dbReference type="GO" id="GO:0031593">
    <property type="term" value="F:polyubiquitin modification-dependent protein binding"/>
    <property type="evidence" value="ECO:0000250"/>
    <property type="project" value="UniProtKB"/>
</dbReference>
<dbReference type="GO" id="GO:0043130">
    <property type="term" value="F:ubiquitin binding"/>
    <property type="evidence" value="ECO:0007669"/>
    <property type="project" value="InterPro"/>
</dbReference>
<dbReference type="GO" id="GO:0140036">
    <property type="term" value="F:ubiquitin-modified protein reader activity"/>
    <property type="evidence" value="ECO:0000250"/>
    <property type="project" value="UniProtKB"/>
</dbReference>
<dbReference type="GO" id="GO:0008270">
    <property type="term" value="F:zinc ion binding"/>
    <property type="evidence" value="ECO:0007669"/>
    <property type="project" value="UniProtKB-KW"/>
</dbReference>
<dbReference type="GO" id="GO:0006974">
    <property type="term" value="P:DNA damage response"/>
    <property type="evidence" value="ECO:0000250"/>
    <property type="project" value="UniProtKB"/>
</dbReference>
<dbReference type="GO" id="GO:0036297">
    <property type="term" value="P:interstrand cross-link repair"/>
    <property type="evidence" value="ECO:0000250"/>
    <property type="project" value="UniProtKB"/>
</dbReference>
<dbReference type="GO" id="GO:0019985">
    <property type="term" value="P:translesion synthesis"/>
    <property type="evidence" value="ECO:0000250"/>
    <property type="project" value="UniProtKB"/>
</dbReference>
<dbReference type="InterPro" id="IPR052689">
    <property type="entry name" value="FA_core_complex_assoc"/>
</dbReference>
<dbReference type="InterPro" id="IPR031491">
    <property type="entry name" value="FANCA_interact"/>
</dbReference>
<dbReference type="InterPro" id="IPR031490">
    <property type="entry name" value="UBZ2_FAAP20"/>
</dbReference>
<dbReference type="PANTHER" id="PTHR37862">
    <property type="entry name" value="FANCONI ANEMIA CORE COMPLEX-ASSOCIATED PROTEIN 20"/>
    <property type="match status" value="1"/>
</dbReference>
<dbReference type="PANTHER" id="PTHR37862:SF1">
    <property type="entry name" value="FANCONI ANEMIA CORE COMPLEX-ASSOCIATED PROTEIN 20"/>
    <property type="match status" value="1"/>
</dbReference>
<dbReference type="Pfam" id="PF15751">
    <property type="entry name" value="FANCA_interact"/>
    <property type="match status" value="1"/>
</dbReference>
<dbReference type="Pfam" id="PF15750">
    <property type="entry name" value="UBZ_FAAP20"/>
    <property type="match status" value="1"/>
</dbReference>
<dbReference type="PROSITE" id="PS51906">
    <property type="entry name" value="ZF_UBZ2"/>
    <property type="match status" value="1"/>
</dbReference>
<organism>
    <name type="scientific">Mus musculus</name>
    <name type="common">Mouse</name>
    <dbReference type="NCBI Taxonomy" id="10090"/>
    <lineage>
        <taxon>Eukaryota</taxon>
        <taxon>Metazoa</taxon>
        <taxon>Chordata</taxon>
        <taxon>Craniata</taxon>
        <taxon>Vertebrata</taxon>
        <taxon>Euteleostomi</taxon>
        <taxon>Mammalia</taxon>
        <taxon>Eutheria</taxon>
        <taxon>Euarchontoglires</taxon>
        <taxon>Glires</taxon>
        <taxon>Rodentia</taxon>
        <taxon>Myomorpha</taxon>
        <taxon>Muroidea</taxon>
        <taxon>Muridae</taxon>
        <taxon>Murinae</taxon>
        <taxon>Mus</taxon>
        <taxon>Mus</taxon>
    </lineage>
</organism>
<feature type="chain" id="PRO_0000316883" description="Fanconi anemia core complex-associated protein 20">
    <location>
        <begin position="1"/>
        <end position="186"/>
    </location>
</feature>
<feature type="zinc finger region" description="UBZ2-type" evidence="3">
    <location>
        <begin position="150"/>
        <end position="186"/>
    </location>
</feature>
<feature type="region of interest" description="Disordered" evidence="4">
    <location>
        <begin position="1"/>
        <end position="30"/>
    </location>
</feature>
<feature type="region of interest" description="Disordered" evidence="4">
    <location>
        <begin position="50"/>
        <end position="90"/>
    </location>
</feature>
<feature type="compositionally biased region" description="Basic residues" evidence="4">
    <location>
        <begin position="7"/>
        <end position="16"/>
    </location>
</feature>
<feature type="binding site" evidence="3">
    <location>
        <position position="153"/>
    </location>
    <ligand>
        <name>Zn(2+)</name>
        <dbReference type="ChEBI" id="CHEBI:29105"/>
    </ligand>
</feature>
<feature type="binding site" evidence="3">
    <location>
        <position position="156"/>
    </location>
    <ligand>
        <name>Zn(2+)</name>
        <dbReference type="ChEBI" id="CHEBI:29105"/>
    </ligand>
</feature>
<feature type="binding site" evidence="3">
    <location>
        <position position="172"/>
    </location>
    <ligand>
        <name>Zn(2+)</name>
        <dbReference type="ChEBI" id="CHEBI:29105"/>
    </ligand>
</feature>
<feature type="binding site" evidence="3">
    <location>
        <position position="176"/>
    </location>
    <ligand>
        <name>Zn(2+)</name>
        <dbReference type="ChEBI" id="CHEBI:29105"/>
    </ligand>
</feature>
<feature type="modified residue" description="Phosphoserine" evidence="2">
    <location>
        <position position="119"/>
    </location>
</feature>
<feature type="splice variant" id="VSP_030817" description="In isoform 2." evidence="6">
    <original>MEEERRLRGRLSRRRPPAGGG</original>
    <variation>MPRLTLPVLPR</variation>
    <location>
        <begin position="1"/>
        <end position="21"/>
    </location>
</feature>
<feature type="splice variant" id="VSP_030818" description="In isoform 3." evidence="5">
    <location>
        <begin position="22"/>
        <end position="34"/>
    </location>
</feature>
<feature type="sequence conflict" description="In Ref. 3; CA457860." evidence="7" ref="3">
    <original>V</original>
    <variation>M</variation>
    <location>
        <position position="184"/>
    </location>
</feature>
<reference key="1">
    <citation type="journal article" date="2005" name="Science">
        <title>The transcriptional landscape of the mammalian genome.</title>
        <authorList>
            <person name="Carninci P."/>
            <person name="Kasukawa T."/>
            <person name="Katayama S."/>
            <person name="Gough J."/>
            <person name="Frith M.C."/>
            <person name="Maeda N."/>
            <person name="Oyama R."/>
            <person name="Ravasi T."/>
            <person name="Lenhard B."/>
            <person name="Wells C."/>
            <person name="Kodzius R."/>
            <person name="Shimokawa K."/>
            <person name="Bajic V.B."/>
            <person name="Brenner S.E."/>
            <person name="Batalov S."/>
            <person name="Forrest A.R."/>
            <person name="Zavolan M."/>
            <person name="Davis M.J."/>
            <person name="Wilming L.G."/>
            <person name="Aidinis V."/>
            <person name="Allen J.E."/>
            <person name="Ambesi-Impiombato A."/>
            <person name="Apweiler R."/>
            <person name="Aturaliya R.N."/>
            <person name="Bailey T.L."/>
            <person name="Bansal M."/>
            <person name="Baxter L."/>
            <person name="Beisel K.W."/>
            <person name="Bersano T."/>
            <person name="Bono H."/>
            <person name="Chalk A.M."/>
            <person name="Chiu K.P."/>
            <person name="Choudhary V."/>
            <person name="Christoffels A."/>
            <person name="Clutterbuck D.R."/>
            <person name="Crowe M.L."/>
            <person name="Dalla E."/>
            <person name="Dalrymple B.P."/>
            <person name="de Bono B."/>
            <person name="Della Gatta G."/>
            <person name="di Bernardo D."/>
            <person name="Down T."/>
            <person name="Engstrom P."/>
            <person name="Fagiolini M."/>
            <person name="Faulkner G."/>
            <person name="Fletcher C.F."/>
            <person name="Fukushima T."/>
            <person name="Furuno M."/>
            <person name="Futaki S."/>
            <person name="Gariboldi M."/>
            <person name="Georgii-Hemming P."/>
            <person name="Gingeras T.R."/>
            <person name="Gojobori T."/>
            <person name="Green R.E."/>
            <person name="Gustincich S."/>
            <person name="Harbers M."/>
            <person name="Hayashi Y."/>
            <person name="Hensch T.K."/>
            <person name="Hirokawa N."/>
            <person name="Hill D."/>
            <person name="Huminiecki L."/>
            <person name="Iacono M."/>
            <person name="Ikeo K."/>
            <person name="Iwama A."/>
            <person name="Ishikawa T."/>
            <person name="Jakt M."/>
            <person name="Kanapin A."/>
            <person name="Katoh M."/>
            <person name="Kawasawa Y."/>
            <person name="Kelso J."/>
            <person name="Kitamura H."/>
            <person name="Kitano H."/>
            <person name="Kollias G."/>
            <person name="Krishnan S.P."/>
            <person name="Kruger A."/>
            <person name="Kummerfeld S.K."/>
            <person name="Kurochkin I.V."/>
            <person name="Lareau L.F."/>
            <person name="Lazarevic D."/>
            <person name="Lipovich L."/>
            <person name="Liu J."/>
            <person name="Liuni S."/>
            <person name="McWilliam S."/>
            <person name="Madan Babu M."/>
            <person name="Madera M."/>
            <person name="Marchionni L."/>
            <person name="Matsuda H."/>
            <person name="Matsuzawa S."/>
            <person name="Miki H."/>
            <person name="Mignone F."/>
            <person name="Miyake S."/>
            <person name="Morris K."/>
            <person name="Mottagui-Tabar S."/>
            <person name="Mulder N."/>
            <person name="Nakano N."/>
            <person name="Nakauchi H."/>
            <person name="Ng P."/>
            <person name="Nilsson R."/>
            <person name="Nishiguchi S."/>
            <person name="Nishikawa S."/>
            <person name="Nori F."/>
            <person name="Ohara O."/>
            <person name="Okazaki Y."/>
            <person name="Orlando V."/>
            <person name="Pang K.C."/>
            <person name="Pavan W.J."/>
            <person name="Pavesi G."/>
            <person name="Pesole G."/>
            <person name="Petrovsky N."/>
            <person name="Piazza S."/>
            <person name="Reed J."/>
            <person name="Reid J.F."/>
            <person name="Ring B.Z."/>
            <person name="Ringwald M."/>
            <person name="Rost B."/>
            <person name="Ruan Y."/>
            <person name="Salzberg S.L."/>
            <person name="Sandelin A."/>
            <person name="Schneider C."/>
            <person name="Schoenbach C."/>
            <person name="Sekiguchi K."/>
            <person name="Semple C.A."/>
            <person name="Seno S."/>
            <person name="Sessa L."/>
            <person name="Sheng Y."/>
            <person name="Shibata Y."/>
            <person name="Shimada H."/>
            <person name="Shimada K."/>
            <person name="Silva D."/>
            <person name="Sinclair B."/>
            <person name="Sperling S."/>
            <person name="Stupka E."/>
            <person name="Sugiura K."/>
            <person name="Sultana R."/>
            <person name="Takenaka Y."/>
            <person name="Taki K."/>
            <person name="Tammoja K."/>
            <person name="Tan S.L."/>
            <person name="Tang S."/>
            <person name="Taylor M.S."/>
            <person name="Tegner J."/>
            <person name="Teichmann S.A."/>
            <person name="Ueda H.R."/>
            <person name="van Nimwegen E."/>
            <person name="Verardo R."/>
            <person name="Wei C.L."/>
            <person name="Yagi K."/>
            <person name="Yamanishi H."/>
            <person name="Zabarovsky E."/>
            <person name="Zhu S."/>
            <person name="Zimmer A."/>
            <person name="Hide W."/>
            <person name="Bult C."/>
            <person name="Grimmond S.M."/>
            <person name="Teasdale R.D."/>
            <person name="Liu E.T."/>
            <person name="Brusic V."/>
            <person name="Quackenbush J."/>
            <person name="Wahlestedt C."/>
            <person name="Mattick J.S."/>
            <person name="Hume D.A."/>
            <person name="Kai C."/>
            <person name="Sasaki D."/>
            <person name="Tomaru Y."/>
            <person name="Fukuda S."/>
            <person name="Kanamori-Katayama M."/>
            <person name="Suzuki M."/>
            <person name="Aoki J."/>
            <person name="Arakawa T."/>
            <person name="Iida J."/>
            <person name="Imamura K."/>
            <person name="Itoh M."/>
            <person name="Kato T."/>
            <person name="Kawaji H."/>
            <person name="Kawagashira N."/>
            <person name="Kawashima T."/>
            <person name="Kojima M."/>
            <person name="Kondo S."/>
            <person name="Konno H."/>
            <person name="Nakano K."/>
            <person name="Ninomiya N."/>
            <person name="Nishio T."/>
            <person name="Okada M."/>
            <person name="Plessy C."/>
            <person name="Shibata K."/>
            <person name="Shiraki T."/>
            <person name="Suzuki S."/>
            <person name="Tagami M."/>
            <person name="Waki K."/>
            <person name="Watahiki A."/>
            <person name="Okamura-Oho Y."/>
            <person name="Suzuki H."/>
            <person name="Kawai J."/>
            <person name="Hayashizaki Y."/>
        </authorList>
    </citation>
    <scope>NUCLEOTIDE SEQUENCE [LARGE SCALE MRNA] (ISOFORM 2)</scope>
    <source>
        <strain>C57BL/6J</strain>
        <tissue>Spinal cord</tissue>
    </source>
</reference>
<reference key="2">
    <citation type="journal article" date="2009" name="PLoS Biol.">
        <title>Lineage-specific biology revealed by a finished genome assembly of the mouse.</title>
        <authorList>
            <person name="Church D.M."/>
            <person name="Goodstadt L."/>
            <person name="Hillier L.W."/>
            <person name="Zody M.C."/>
            <person name="Goldstein S."/>
            <person name="She X."/>
            <person name="Bult C.J."/>
            <person name="Agarwala R."/>
            <person name="Cherry J.L."/>
            <person name="DiCuccio M."/>
            <person name="Hlavina W."/>
            <person name="Kapustin Y."/>
            <person name="Meric P."/>
            <person name="Maglott D."/>
            <person name="Birtle Z."/>
            <person name="Marques A.C."/>
            <person name="Graves T."/>
            <person name="Zhou S."/>
            <person name="Teague B."/>
            <person name="Potamousis K."/>
            <person name="Churas C."/>
            <person name="Place M."/>
            <person name="Herschleb J."/>
            <person name="Runnheim R."/>
            <person name="Forrest D."/>
            <person name="Amos-Landgraf J."/>
            <person name="Schwartz D.C."/>
            <person name="Cheng Z."/>
            <person name="Lindblad-Toh K."/>
            <person name="Eichler E.E."/>
            <person name="Ponting C.P."/>
        </authorList>
    </citation>
    <scope>NUCLEOTIDE SEQUENCE [LARGE SCALE GENOMIC DNA]</scope>
    <source>
        <strain>C57BL/6J</strain>
    </source>
</reference>
<reference key="3">
    <citation type="journal article" date="2004" name="Genome Res.">
        <title>The status, quality, and expansion of the NIH full-length cDNA project: the Mammalian Gene Collection (MGC).</title>
        <authorList>
            <consortium name="The MGC Project Team"/>
        </authorList>
    </citation>
    <scope>NUCLEOTIDE SEQUENCE [LARGE SCALE MRNA] (ISOFORMS 1 AND 3)</scope>
    <source>
        <tissue>Brain</tissue>
        <tissue>Liver</tissue>
    </source>
</reference>
<name>FAP20_MOUSE</name>
<keyword id="KW-0025">Alternative splicing</keyword>
<keyword id="KW-0158">Chromosome</keyword>
<keyword id="KW-0227">DNA damage</keyword>
<keyword id="KW-0234">DNA repair</keyword>
<keyword id="KW-0479">Metal-binding</keyword>
<keyword id="KW-0539">Nucleus</keyword>
<keyword id="KW-0597">Phosphoprotein</keyword>
<keyword id="KW-1185">Reference proteome</keyword>
<keyword id="KW-0862">Zinc</keyword>
<keyword id="KW-0863">Zinc-finger</keyword>
<sequence length="186" mass="20038">MEEERRLRGRLSRRRPPAGGGPPNCRPWFLSEGSKSEPWAALLRSTVSGTADWTPNRQPLPPLPAFPSQESLPDPESTVPPEAFTVGSKTFSWTPLPPALRGSGSSRHLFCEPEGSLGSPTPSLKGCPALNSGRTPSAQECVPVQSPLALLSCPLCQKAFDPKLTQLDVDSHLAQCLAECTEDVVW</sequence>
<evidence type="ECO:0000250" key="1"/>
<evidence type="ECO:0000250" key="2">
    <source>
        <dbReference type="UniProtKB" id="Q6NZ36"/>
    </source>
</evidence>
<evidence type="ECO:0000255" key="3">
    <source>
        <dbReference type="PROSITE-ProRule" id="PRU01254"/>
    </source>
</evidence>
<evidence type="ECO:0000256" key="4">
    <source>
        <dbReference type="SAM" id="MobiDB-lite"/>
    </source>
</evidence>
<evidence type="ECO:0000303" key="5">
    <source>
    </source>
</evidence>
<evidence type="ECO:0000303" key="6">
    <source>
    </source>
</evidence>
<evidence type="ECO:0000305" key="7"/>
<accession>Q3UN58</accession>
<accession>A2ADD8</accession>
<accession>Q0VG17</accession>
<comment type="function">
    <text evidence="1">Component of the Fanconi anemia (FA) complex required to recruit the FA complex to DNA interstrand cross-links (ICLs) and promote ICLs repair. Following DNA damage recognizes and binds 'Lys-63'-linked ubiquitin generated by RNF8 at ICLs and recruits other components of the FA complex. Promotes translesion synthesis via interaction with REV1 (By similarity).</text>
</comment>
<comment type="subunit">
    <text evidence="1">Component of the Fanconi anemia (FA) complex. Interacts with FANCA; interaction is direct. Interacts with REV1 (By similarity).</text>
</comment>
<comment type="subcellular location">
    <subcellularLocation>
        <location evidence="2">Nucleus</location>
    </subcellularLocation>
    <subcellularLocation>
        <location evidence="2">Chromosome</location>
    </subcellularLocation>
    <text evidence="2">Following DNA damage, recruited to DNA interstrand cross-links (ICLs) sites by binding to ubiquitin generated by RNF8.</text>
</comment>
<comment type="alternative products">
    <event type="alternative splicing"/>
    <isoform>
        <id>Q3UN58-1</id>
        <name>1</name>
        <sequence type="displayed"/>
    </isoform>
    <isoform>
        <id>Q3UN58-2</id>
        <name>2</name>
        <sequence type="described" ref="VSP_030817"/>
    </isoform>
    <isoform>
        <id>Q3UN58-3</id>
        <name>3</name>
        <sequence type="described" ref="VSP_030818"/>
    </isoform>
</comment>
<comment type="domain">
    <text evidence="3">The UBZ2-type zinc finger binds both 'Lys-48'- and 'Lys-63'-linked polyubiquitin with preference for 'Lys-63'-linked polyubiquitin.</text>
</comment>